<reference key="1">
    <citation type="journal article" date="2005" name="Nature">
        <title>Genomic sequence of the pathogenic and allergenic filamentous fungus Aspergillus fumigatus.</title>
        <authorList>
            <person name="Nierman W.C."/>
            <person name="Pain A."/>
            <person name="Anderson M.J."/>
            <person name="Wortman J.R."/>
            <person name="Kim H.S."/>
            <person name="Arroyo J."/>
            <person name="Berriman M."/>
            <person name="Abe K."/>
            <person name="Archer D.B."/>
            <person name="Bermejo C."/>
            <person name="Bennett J.W."/>
            <person name="Bowyer P."/>
            <person name="Chen D."/>
            <person name="Collins M."/>
            <person name="Coulsen R."/>
            <person name="Davies R."/>
            <person name="Dyer P.S."/>
            <person name="Farman M.L."/>
            <person name="Fedorova N."/>
            <person name="Fedorova N.D."/>
            <person name="Feldblyum T.V."/>
            <person name="Fischer R."/>
            <person name="Fosker N."/>
            <person name="Fraser A."/>
            <person name="Garcia J.L."/>
            <person name="Garcia M.J."/>
            <person name="Goble A."/>
            <person name="Goldman G.H."/>
            <person name="Gomi K."/>
            <person name="Griffith-Jones S."/>
            <person name="Gwilliam R."/>
            <person name="Haas B.J."/>
            <person name="Haas H."/>
            <person name="Harris D.E."/>
            <person name="Horiuchi H."/>
            <person name="Huang J."/>
            <person name="Humphray S."/>
            <person name="Jimenez J."/>
            <person name="Keller N."/>
            <person name="Khouri H."/>
            <person name="Kitamoto K."/>
            <person name="Kobayashi T."/>
            <person name="Konzack S."/>
            <person name="Kulkarni R."/>
            <person name="Kumagai T."/>
            <person name="Lafton A."/>
            <person name="Latge J.-P."/>
            <person name="Li W."/>
            <person name="Lord A."/>
            <person name="Lu C."/>
            <person name="Majoros W.H."/>
            <person name="May G.S."/>
            <person name="Miller B.L."/>
            <person name="Mohamoud Y."/>
            <person name="Molina M."/>
            <person name="Monod M."/>
            <person name="Mouyna I."/>
            <person name="Mulligan S."/>
            <person name="Murphy L.D."/>
            <person name="O'Neil S."/>
            <person name="Paulsen I."/>
            <person name="Penalva M.A."/>
            <person name="Pertea M."/>
            <person name="Price C."/>
            <person name="Pritchard B.L."/>
            <person name="Quail M.A."/>
            <person name="Rabbinowitsch E."/>
            <person name="Rawlins N."/>
            <person name="Rajandream M.A."/>
            <person name="Reichard U."/>
            <person name="Renauld H."/>
            <person name="Robson G.D."/>
            <person name="Rodriguez de Cordoba S."/>
            <person name="Rodriguez-Pena J.M."/>
            <person name="Ronning C.M."/>
            <person name="Rutter S."/>
            <person name="Salzberg S.L."/>
            <person name="Sanchez M."/>
            <person name="Sanchez-Ferrero J.C."/>
            <person name="Saunders D."/>
            <person name="Seeger K."/>
            <person name="Squares R."/>
            <person name="Squares S."/>
            <person name="Takeuchi M."/>
            <person name="Tekaia F."/>
            <person name="Turner G."/>
            <person name="Vazquez de Aldana C.R."/>
            <person name="Weidman J."/>
            <person name="White O."/>
            <person name="Woodward J.R."/>
            <person name="Yu J.-H."/>
            <person name="Fraser C.M."/>
            <person name="Galagan J.E."/>
            <person name="Asai K."/>
            <person name="Machida M."/>
            <person name="Hall N."/>
            <person name="Barrell B.G."/>
            <person name="Denning D.W."/>
        </authorList>
    </citation>
    <scope>NUCLEOTIDE SEQUENCE [LARGE SCALE GENOMIC DNA]</scope>
    <source>
        <strain>ATCC MYA-4609 / CBS 101355 / FGSC A1100 / Af293</strain>
    </source>
</reference>
<reference key="2">
    <citation type="journal article" date="2023" name="Chem. Sci.">
        <title>A heterologous expression platform in Aspergillus nidulans for the elucidation of cryptic secondary metabolism biosynthetic gene clusters: discovery of the Aspergillus fumigatus sartorypyrone biosynthetic pathway.</title>
        <authorList>
            <person name="Lin S.Y."/>
            <person name="Oakley C.E."/>
            <person name="Jenkinson C.B."/>
            <person name="Chiang Y.M."/>
            <person name="Lee C.K."/>
            <person name="Jones C.G."/>
            <person name="Seidler P.M."/>
            <person name="Nelson H.M."/>
            <person name="Todd R.B."/>
            <person name="Wang C.C.C."/>
            <person name="Oakley B.R."/>
        </authorList>
    </citation>
    <scope>FUNCTION</scope>
    <scope>DISRUPTION PHENOTYPE</scope>
    <scope>CATALYTIC ACTIVITY</scope>
    <scope>PATHWAY</scope>
</reference>
<keyword id="KW-0456">Lyase</keyword>
<keyword id="KW-0472">Membrane</keyword>
<keyword id="KW-1185">Reference proteome</keyword>
<keyword id="KW-0812">Transmembrane</keyword>
<keyword id="KW-1133">Transmembrane helix</keyword>
<proteinExistence type="evidence at protein level"/>
<protein>
    <recommendedName>
        <fullName evidence="3">Terpene cyclase spyD</fullName>
        <ecNumber evidence="2">4.2.3.-</ecNumber>
    </recommendedName>
    <alternativeName>
        <fullName evidence="3">Sartorypyrone biosynthesis cluster protein D</fullName>
    </alternativeName>
</protein>
<comment type="function">
    <text evidence="2">Terpene cyclase; part of the gene cluster that mediates the biosynthesis of meroterpenoids called sartorypyrones (PubMed:37860661). Within the pathway, spyD catalyzes the cyclization of epoxygeranylgeranyl-triacetate lactone. SpyD exhibits promiscuous activity, resulting in the formation of bicyclic sartorypyrone F and monocyclic sartorypyrone D (PubMed:37860661). The biosynthesis of sartorypyrones begins with the production of triacetic acid lactone (TAL) by the NR-PKS spyA using one molecule of acetyl-CoA and two molecules of malonyl-CoA. The prenyltransferase spyF then conjugates geranylgeranyl pyrophosphate (GGPP) to TAL to form geranylgeranyl-triacetate lactone, for which the pathway-specific geranylgeranyl pyrophosphate synthase (GGPS) spyE is required to provide GGPP. Subsequently, geranylgeranyl-triacetate lactone is epoxidized at the terminal olein by the FAD-dependent monooxygenase spyC, followed by cyclization of the terpenoid component catalyzed by the terpene cyclase spyD to produce both the bicyclic sartorypyrone F and the monocyclic sartorypyrone D. Finally, the last step of the biosynthesis involves the acetylation of the meroterpenoids sartorypyrones D and F by the acetyltransferase SpyB to produce sartorypyrones A and G, respectively (PubMed:37860661).</text>
</comment>
<comment type="catalytic activity">
    <reaction evidence="2">
        <text>(S)-(2E,6E,10E)-epoxygeranylgeranyl-triacetate lactone = sartorypyrone F</text>
        <dbReference type="Rhea" id="RHEA:80871"/>
        <dbReference type="ChEBI" id="CHEBI:231738"/>
        <dbReference type="ChEBI" id="CHEBI:231739"/>
    </reaction>
    <physiologicalReaction direction="left-to-right" evidence="2">
        <dbReference type="Rhea" id="RHEA:80872"/>
    </physiologicalReaction>
</comment>
<comment type="catalytic activity">
    <reaction evidence="2">
        <text>(S)-(2E,6E,10E)-epoxygeranylgeranyl-triacetate lactone = sartorypyrone D</text>
        <dbReference type="Rhea" id="RHEA:80875"/>
        <dbReference type="ChEBI" id="CHEBI:201384"/>
        <dbReference type="ChEBI" id="CHEBI:231738"/>
    </reaction>
    <physiologicalReaction direction="left-to-right" evidence="2">
        <dbReference type="Rhea" id="RHEA:80876"/>
    </physiologicalReaction>
</comment>
<comment type="pathway">
    <text evidence="2">Secondary metabolite biosynthesis; terpenoid biosynthesis.</text>
</comment>
<comment type="subcellular location">
    <subcellularLocation>
        <location evidence="1">Membrane</location>
        <topology evidence="1">Multi-pass membrane protein</topology>
    </subcellularLocation>
</comment>
<comment type="disruption phenotype">
    <text evidence="2">Accumulates 2 uncyclized prenylated polyketides, sartorypyrone E and poxygeranylgeranyl-triacetate lactone.</text>
</comment>
<comment type="similarity">
    <text evidence="4">Belongs to the paxB family.</text>
</comment>
<sequence length="237" mass="26803">MDAYSSFPAEFEAVRPIYNVLVATAGMMWLINYIVTVRQIFRDRVRAIPLVSLCCNIAWEFTVVLVYRRPYLLFEIFCAMWLLVNMVIVYGSVKVSMEKQRSSSLVHKHLPLIVPLAILGCISGYYALAKTIGTPKTIHGGGTFASFVMTVDCLCQLLQRGSTHGASWTMWLTRVLGSYAAIVGEFLKAGFWPQQWGWYDNALMRWCTGMAVTMDILYACIFWYMGQAEEAAKGRKA</sequence>
<gene>
    <name evidence="3" type="primary">spyD</name>
    <name type="ORF">AFUA_8G02390</name>
</gene>
<feature type="chain" id="PRO_0000461221" description="Terpene cyclase spyD">
    <location>
        <begin position="1"/>
        <end position="237"/>
    </location>
</feature>
<feature type="transmembrane region" description="Helical" evidence="1">
    <location>
        <begin position="17"/>
        <end position="37"/>
    </location>
</feature>
<feature type="transmembrane region" description="Helical" evidence="1">
    <location>
        <begin position="47"/>
        <end position="67"/>
    </location>
</feature>
<feature type="transmembrane region" description="Helical" evidence="1">
    <location>
        <begin position="71"/>
        <end position="91"/>
    </location>
</feature>
<feature type="transmembrane region" description="Helical" evidence="1">
    <location>
        <begin position="109"/>
        <end position="129"/>
    </location>
</feature>
<feature type="transmembrane region" description="Helical" evidence="1">
    <location>
        <begin position="138"/>
        <end position="158"/>
    </location>
</feature>
<feature type="transmembrane region" description="Helical" evidence="1">
    <location>
        <begin position="167"/>
        <end position="187"/>
    </location>
</feature>
<feature type="transmembrane region" description="Helical" evidence="1">
    <location>
        <begin position="206"/>
        <end position="226"/>
    </location>
</feature>
<name>SPYD_ASPFU</name>
<evidence type="ECO:0000255" key="1"/>
<evidence type="ECO:0000269" key="2">
    <source>
    </source>
</evidence>
<evidence type="ECO:0000303" key="3">
    <source>
    </source>
</evidence>
<evidence type="ECO:0000305" key="4"/>
<dbReference type="EC" id="4.2.3.-" evidence="2"/>
<dbReference type="EMBL" id="AAHF01000014">
    <property type="protein sequence ID" value="EAL84929.1"/>
    <property type="molecule type" value="Genomic_DNA"/>
</dbReference>
<dbReference type="RefSeq" id="XP_746967.1">
    <property type="nucleotide sequence ID" value="XM_741874.1"/>
</dbReference>
<dbReference type="SMR" id="Q4WBI3"/>
<dbReference type="EnsemblFungi" id="EAL84929">
    <property type="protein sequence ID" value="EAL84929"/>
    <property type="gene ID" value="AFUA_8G02390"/>
</dbReference>
<dbReference type="GeneID" id="3504516"/>
<dbReference type="KEGG" id="afm:AFUA_8G02390"/>
<dbReference type="VEuPathDB" id="FungiDB:Afu8g02390"/>
<dbReference type="eggNOG" id="ENOG502RP0W">
    <property type="taxonomic scope" value="Eukaryota"/>
</dbReference>
<dbReference type="HOGENOM" id="CLU_087059_3_0_1"/>
<dbReference type="InParanoid" id="Q4WBI3"/>
<dbReference type="OMA" id="LWWYWPE"/>
<dbReference type="OrthoDB" id="5294024at2759"/>
<dbReference type="UniPathway" id="UPA00213"/>
<dbReference type="Proteomes" id="UP000002530">
    <property type="component" value="Chromosome 8"/>
</dbReference>
<dbReference type="GO" id="GO:0016020">
    <property type="term" value="C:membrane"/>
    <property type="evidence" value="ECO:0007669"/>
    <property type="project" value="UniProtKB-SubCell"/>
</dbReference>
<dbReference type="GO" id="GO:0016829">
    <property type="term" value="F:lyase activity"/>
    <property type="evidence" value="ECO:0007669"/>
    <property type="project" value="UniProtKB-KW"/>
</dbReference>
<dbReference type="InterPro" id="IPR039020">
    <property type="entry name" value="PaxB-like"/>
</dbReference>
<dbReference type="PANTHER" id="PTHR42038">
    <property type="match status" value="1"/>
</dbReference>
<dbReference type="PANTHER" id="PTHR42038:SF3">
    <property type="entry name" value="INTEGRAL MEMBRANE PROTEIN (AFU_ORTHOLOGUE AFUA_5G14600)"/>
    <property type="match status" value="1"/>
</dbReference>
<dbReference type="Pfam" id="PF25129">
    <property type="entry name" value="Pyr4-TMTC"/>
    <property type="match status" value="1"/>
</dbReference>
<accession>Q4WBI3</accession>
<organism>
    <name type="scientific">Aspergillus fumigatus (strain ATCC MYA-4609 / CBS 101355 / FGSC A1100 / Af293)</name>
    <name type="common">Neosartorya fumigata</name>
    <dbReference type="NCBI Taxonomy" id="330879"/>
    <lineage>
        <taxon>Eukaryota</taxon>
        <taxon>Fungi</taxon>
        <taxon>Dikarya</taxon>
        <taxon>Ascomycota</taxon>
        <taxon>Pezizomycotina</taxon>
        <taxon>Eurotiomycetes</taxon>
        <taxon>Eurotiomycetidae</taxon>
        <taxon>Eurotiales</taxon>
        <taxon>Aspergillaceae</taxon>
        <taxon>Aspergillus</taxon>
        <taxon>Aspergillus subgen. Fumigati</taxon>
    </lineage>
</organism>